<evidence type="ECO:0000250" key="1">
    <source>
        <dbReference type="UniProtKB" id="Q7K5N4"/>
    </source>
</evidence>
<evidence type="ECO:0000255" key="2">
    <source>
        <dbReference type="PROSITE-ProRule" id="PRU01393"/>
    </source>
</evidence>
<evidence type="ECO:0000255" key="3">
    <source>
        <dbReference type="PROSITE-ProRule" id="PRU01394"/>
    </source>
</evidence>
<evidence type="ECO:0000256" key="4">
    <source>
        <dbReference type="SAM" id="MobiDB-lite"/>
    </source>
</evidence>
<evidence type="ECO:0000305" key="5"/>
<protein>
    <recommendedName>
        <fullName evidence="1">Ubiquitin carboxyl-terminal hydrolase calypso</fullName>
        <ecNumber evidence="1">3.4.19.12</ecNumber>
    </recommendedName>
    <alternativeName>
        <fullName evidence="1">BRCA1-associated protein 1 homolog</fullName>
        <shortName evidence="1">BAP1 homolog</shortName>
    </alternativeName>
    <alternativeName>
        <fullName evidence="1">Polycomb group protein calypso</fullName>
    </alternativeName>
</protein>
<proteinExistence type="inferred from homology"/>
<sequence>MPVDINRLTDGWLELESDPGLFTLLLEDFGVKGVQVEEIYDLQKNIEGPVYGFIFLFRWIEERRARRKIVETTEIYVKDEEAVNNIFFAQQVVPNSCATHALLSVLLNCSDIDLGNTLSRLKVHTKGMCPENKGWAIGNTPELACAHNSHAMPQARRRMDRNSGVSTGRFTGEAFHFVSFVPINGHLFELDGLKPFPMDHGPWGEKEAWTDKFRRVMSDRLGISTGEQDIRFNLMAVVPDRRIAITHKLKMLRTNQTIVSAALEKLLKSKRTESRSLETVDKIKKEEESPVKLSSEYSQLLEMNEKDDSSVPMSKELESLVSLNSSSDSVEIIGETEIKKENPPPSPPPSFIGAGTFSPKDLLSLLKNLESEINITEQHLCDENEKRAMFKVDDCRRTHNYDEFICTFLSMLAHQGELGDLVSQHLITNRKPNMGSVQNSGSRGVVRNYNKKTTTNGSSPKTPSSKRRRGRTKYRKRK</sequence>
<gene>
    <name evidence="1" type="primary">caly</name>
    <name evidence="1" type="synonym">BAP1</name>
    <name type="ORF">AAEL000787</name>
</gene>
<accession>Q17N72</accession>
<keyword id="KW-0156">Chromatin regulator</keyword>
<keyword id="KW-0378">Hydrolase</keyword>
<keyword id="KW-0539">Nucleus</keyword>
<keyword id="KW-0645">Protease</keyword>
<keyword id="KW-1185">Reference proteome</keyword>
<keyword id="KW-0788">Thiol protease</keyword>
<keyword id="KW-0833">Ubl conjugation pathway</keyword>
<dbReference type="EC" id="3.4.19.12" evidence="1"/>
<dbReference type="EMBL" id="CH477201">
    <property type="protein sequence ID" value="EAT48182.1"/>
    <property type="molecule type" value="Genomic_DNA"/>
</dbReference>
<dbReference type="RefSeq" id="XP_001651006.1">
    <property type="nucleotide sequence ID" value="XM_001650956.1"/>
</dbReference>
<dbReference type="SMR" id="Q17N72"/>
<dbReference type="FunCoup" id="Q17N72">
    <property type="interactions" value="1200"/>
</dbReference>
<dbReference type="STRING" id="7159.Q17N72"/>
<dbReference type="MEROPS" id="C12.A09"/>
<dbReference type="PaxDb" id="7159-AAEL000787-PA"/>
<dbReference type="GeneID" id="5566609"/>
<dbReference type="KEGG" id="aag:5566609"/>
<dbReference type="CTD" id="136037741"/>
<dbReference type="VEuPathDB" id="VectorBase:AAEL000787"/>
<dbReference type="eggNOG" id="KOG2778">
    <property type="taxonomic scope" value="Eukaryota"/>
</dbReference>
<dbReference type="HOGENOM" id="CLU_018316_2_1_1"/>
<dbReference type="InParanoid" id="Q17N72"/>
<dbReference type="OMA" id="MNHGCWE"/>
<dbReference type="OrthoDB" id="1924260at2759"/>
<dbReference type="PhylomeDB" id="Q17N72"/>
<dbReference type="Proteomes" id="UP000008820">
    <property type="component" value="Unassembled WGS sequence"/>
</dbReference>
<dbReference type="Proteomes" id="UP000682892">
    <property type="component" value="Unassembled WGS sequence"/>
</dbReference>
<dbReference type="GO" id="GO:0000785">
    <property type="term" value="C:chromatin"/>
    <property type="evidence" value="ECO:0000250"/>
    <property type="project" value="UniProtKB"/>
</dbReference>
<dbReference type="GO" id="GO:0005737">
    <property type="term" value="C:cytoplasm"/>
    <property type="evidence" value="ECO:0007669"/>
    <property type="project" value="TreeGrafter"/>
</dbReference>
<dbReference type="GO" id="GO:0035517">
    <property type="term" value="C:PR-DUB complex"/>
    <property type="evidence" value="ECO:0000250"/>
    <property type="project" value="UniProtKB"/>
</dbReference>
<dbReference type="GO" id="GO:0003682">
    <property type="term" value="F:chromatin binding"/>
    <property type="evidence" value="ECO:0000250"/>
    <property type="project" value="UniProtKB"/>
</dbReference>
<dbReference type="GO" id="GO:0004843">
    <property type="term" value="F:cysteine-type deubiquitinase activity"/>
    <property type="evidence" value="ECO:0000250"/>
    <property type="project" value="UniProtKB"/>
</dbReference>
<dbReference type="GO" id="GO:0040029">
    <property type="term" value="P:epigenetic regulation of gene expression"/>
    <property type="evidence" value="ECO:0000250"/>
    <property type="project" value="UniProtKB"/>
</dbReference>
<dbReference type="GO" id="GO:0031507">
    <property type="term" value="P:heterochromatin formation"/>
    <property type="evidence" value="ECO:0000250"/>
    <property type="project" value="UniProtKB"/>
</dbReference>
<dbReference type="GO" id="GO:0016579">
    <property type="term" value="P:protein deubiquitination"/>
    <property type="evidence" value="ECO:0007669"/>
    <property type="project" value="TreeGrafter"/>
</dbReference>
<dbReference type="GO" id="GO:0006511">
    <property type="term" value="P:ubiquitin-dependent protein catabolic process"/>
    <property type="evidence" value="ECO:0007669"/>
    <property type="project" value="InterPro"/>
</dbReference>
<dbReference type="CDD" id="cd09617">
    <property type="entry name" value="Peptidase_C12_UCH37_BAP1"/>
    <property type="match status" value="1"/>
</dbReference>
<dbReference type="FunFam" id="1.20.58.860:FF:000006">
    <property type="entry name" value="Ubiquitin carboxyl-terminal hydrolase"/>
    <property type="match status" value="1"/>
</dbReference>
<dbReference type="FunFam" id="3.40.532.10:FF:000002">
    <property type="entry name" value="Ubiquitin carboxyl-terminal hydrolase"/>
    <property type="match status" value="1"/>
</dbReference>
<dbReference type="Gene3D" id="1.20.58.860">
    <property type="match status" value="1"/>
</dbReference>
<dbReference type="Gene3D" id="3.40.532.10">
    <property type="entry name" value="Peptidase C12, ubiquitin carboxyl-terminal hydrolase"/>
    <property type="match status" value="1"/>
</dbReference>
<dbReference type="InterPro" id="IPR038765">
    <property type="entry name" value="Papain-like_cys_pep_sf"/>
</dbReference>
<dbReference type="InterPro" id="IPR001578">
    <property type="entry name" value="Peptidase_C12_UCH"/>
</dbReference>
<dbReference type="InterPro" id="IPR036959">
    <property type="entry name" value="Peptidase_C12_UCH_sf"/>
</dbReference>
<dbReference type="InterPro" id="IPR041507">
    <property type="entry name" value="UCH_C"/>
</dbReference>
<dbReference type="PANTHER" id="PTHR10589">
    <property type="entry name" value="UBIQUITIN CARBOXYL-TERMINAL HYDROLASE"/>
    <property type="match status" value="1"/>
</dbReference>
<dbReference type="PANTHER" id="PTHR10589:SF28">
    <property type="entry name" value="UBIQUITIN CARBOXYL-TERMINAL HYDROLASE BAP1"/>
    <property type="match status" value="1"/>
</dbReference>
<dbReference type="Pfam" id="PF01088">
    <property type="entry name" value="Peptidase_C12"/>
    <property type="match status" value="1"/>
</dbReference>
<dbReference type="Pfam" id="PF18031">
    <property type="entry name" value="UCH_C"/>
    <property type="match status" value="1"/>
</dbReference>
<dbReference type="PRINTS" id="PR00707">
    <property type="entry name" value="UBCTHYDRLASE"/>
</dbReference>
<dbReference type="SUPFAM" id="SSF54001">
    <property type="entry name" value="Cysteine proteinases"/>
    <property type="match status" value="1"/>
</dbReference>
<dbReference type="PROSITE" id="PS52048">
    <property type="entry name" value="UCH_DOMAIN"/>
    <property type="match status" value="1"/>
</dbReference>
<dbReference type="PROSITE" id="PS52049">
    <property type="entry name" value="ULD"/>
    <property type="match status" value="1"/>
</dbReference>
<reference key="1">
    <citation type="journal article" date="2007" name="Science">
        <title>Genome sequence of Aedes aegypti, a major arbovirus vector.</title>
        <authorList>
            <person name="Nene V."/>
            <person name="Wortman J.R."/>
            <person name="Lawson D."/>
            <person name="Haas B.J."/>
            <person name="Kodira C.D."/>
            <person name="Tu Z.J."/>
            <person name="Loftus B.J."/>
            <person name="Xi Z."/>
            <person name="Megy K."/>
            <person name="Grabherr M."/>
            <person name="Ren Q."/>
            <person name="Zdobnov E.M."/>
            <person name="Lobo N.F."/>
            <person name="Campbell K.S."/>
            <person name="Brown S.E."/>
            <person name="Bonaldo M.F."/>
            <person name="Zhu J."/>
            <person name="Sinkins S.P."/>
            <person name="Hogenkamp D.G."/>
            <person name="Amedeo P."/>
            <person name="Arensburger P."/>
            <person name="Atkinson P.W."/>
            <person name="Bidwell S.L."/>
            <person name="Biedler J."/>
            <person name="Birney E."/>
            <person name="Bruggner R.V."/>
            <person name="Costas J."/>
            <person name="Coy M.R."/>
            <person name="Crabtree J."/>
            <person name="Crawford M."/>
            <person name="DeBruyn B."/>
            <person name="DeCaprio D."/>
            <person name="Eiglmeier K."/>
            <person name="Eisenstadt E."/>
            <person name="El-Dorry H."/>
            <person name="Gelbart W.M."/>
            <person name="Gomes S.L."/>
            <person name="Hammond M."/>
            <person name="Hannick L.I."/>
            <person name="Hogan J.R."/>
            <person name="Holmes M.H."/>
            <person name="Jaffe D."/>
            <person name="Johnston S.J."/>
            <person name="Kennedy R.C."/>
            <person name="Koo H."/>
            <person name="Kravitz S."/>
            <person name="Kriventseva E.V."/>
            <person name="Kulp D."/>
            <person name="Labutti K."/>
            <person name="Lee E."/>
            <person name="Li S."/>
            <person name="Lovin D.D."/>
            <person name="Mao C."/>
            <person name="Mauceli E."/>
            <person name="Menck C.F."/>
            <person name="Miller J.R."/>
            <person name="Montgomery P."/>
            <person name="Mori A."/>
            <person name="Nascimento A.L."/>
            <person name="Naveira H.F."/>
            <person name="Nusbaum C."/>
            <person name="O'Leary S.B."/>
            <person name="Orvis J."/>
            <person name="Pertea M."/>
            <person name="Quesneville H."/>
            <person name="Reidenbach K.R."/>
            <person name="Rogers Y.-H.C."/>
            <person name="Roth C.W."/>
            <person name="Schneider J.R."/>
            <person name="Schatz M."/>
            <person name="Shumway M."/>
            <person name="Stanke M."/>
            <person name="Stinson E.O."/>
            <person name="Tubio J.M.C."/>
            <person name="Vanzee J.P."/>
            <person name="Verjovski-Almeida S."/>
            <person name="Werner D."/>
            <person name="White O.R."/>
            <person name="Wyder S."/>
            <person name="Zeng Q."/>
            <person name="Zhao Q."/>
            <person name="Zhao Y."/>
            <person name="Hill C.A."/>
            <person name="Raikhel A.S."/>
            <person name="Soares M.B."/>
            <person name="Knudson D.L."/>
            <person name="Lee N.H."/>
            <person name="Galagan J."/>
            <person name="Salzberg S.L."/>
            <person name="Paulsen I.T."/>
            <person name="Dimopoulos G."/>
            <person name="Collins F.H."/>
            <person name="Bruce B."/>
            <person name="Fraser-Liggett C.M."/>
            <person name="Severson D.W."/>
        </authorList>
    </citation>
    <scope>NUCLEOTIDE SEQUENCE [LARGE SCALE GENOMIC DNA]</scope>
    <source>
        <strain>LVPib12</strain>
    </source>
</reference>
<organism>
    <name type="scientific">Aedes aegypti</name>
    <name type="common">Yellowfever mosquito</name>
    <name type="synonym">Culex aegypti</name>
    <dbReference type="NCBI Taxonomy" id="7159"/>
    <lineage>
        <taxon>Eukaryota</taxon>
        <taxon>Metazoa</taxon>
        <taxon>Ecdysozoa</taxon>
        <taxon>Arthropoda</taxon>
        <taxon>Hexapoda</taxon>
        <taxon>Insecta</taxon>
        <taxon>Pterygota</taxon>
        <taxon>Neoptera</taxon>
        <taxon>Endopterygota</taxon>
        <taxon>Diptera</taxon>
        <taxon>Nematocera</taxon>
        <taxon>Culicoidea</taxon>
        <taxon>Culicidae</taxon>
        <taxon>Culicinae</taxon>
        <taxon>Aedini</taxon>
        <taxon>Aedes</taxon>
        <taxon>Stegomyia</taxon>
    </lineage>
</organism>
<comment type="function">
    <text evidence="1">Catalytic component of the polycomb repressive deubiquitinase (PR-DUB) complex, a complex that specifically mediates deubiquitination of histone H2A monoubiquitinated at 'Lys-119' (H2AK118ub1). Mediates bisymmetric organization of the PR-DUB complex and is involved in association with nucleosomes to mediate deubiquitination. Does not deubiquitinate monoubiquitinated histone H2B. Required to maintain the transcriptionally repressive state of homeotic genes throughout development. The PR-DUB complex has weak or no activity toward 'Lys-48'- and 'Lys-63'-linked polyubiquitin chains. Polycomb group (PcG) protein.</text>
</comment>
<comment type="catalytic activity">
    <reaction evidence="1">
        <text>Thiol-dependent hydrolysis of ester, thioester, amide, peptide and isopeptide bonds formed by the C-terminal Gly of ubiquitin (a 76-residue protein attached to proteins as an intracellular targeting signal).</text>
        <dbReference type="EC" id="3.4.19.12"/>
    </reaction>
</comment>
<comment type="subunit">
    <text evidence="1">Catalytic component of the polycomb repressive deubiquitinase (PR-DUB) complex, at least composed of caly/calypso, Asx and sba (MBD5/6 homolog). The PR-DUB complex associates with nucleosomes to mediate deubiquitination of histone H2AK118ub1 substrates; the association requires the positively charged C-terminal tail of caly, probably due to direct binding of DNA. Interacts (via ULD domain) with Asx (via DEUBAD domain); the interaction produces a stable heterodimer with a composite binding site for ubiquitin. Homodimerizes (via coiled-coil hinge-region between the UCH and ULD domains) to mediate assembly of 2 copies of the caly-Asx heterodimer into a bisymmetric tetramer; dimerization enhances PR-DUB association with nucleosomes.</text>
</comment>
<comment type="subcellular location">
    <subcellularLocation>
        <location evidence="1">Nucleus</location>
    </subcellularLocation>
    <text evidence="1">Localizes to PcG response elements (PREs).</text>
</comment>
<comment type="similarity">
    <text evidence="5">Belongs to the peptidase C12 family. BAP1 subfamily.</text>
</comment>
<feature type="chain" id="PRO_0000395824" description="Ubiquitin carboxyl-terminal hydrolase calypso">
    <location>
        <begin position="1"/>
        <end position="478"/>
    </location>
</feature>
<feature type="domain" description="UCH catalytic" evidence="2">
    <location>
        <begin position="11"/>
        <end position="239"/>
    </location>
</feature>
<feature type="domain" description="ULD" evidence="3">
    <location>
        <begin position="400"/>
        <end position="428"/>
    </location>
</feature>
<feature type="region of interest" description="Positively charged C-terminal tail required for binding nucleosomes" evidence="1">
    <location>
        <begin position="430"/>
        <end position="478"/>
    </location>
</feature>
<feature type="region of interest" description="Disordered" evidence="4">
    <location>
        <begin position="432"/>
        <end position="478"/>
    </location>
</feature>
<feature type="compositionally biased region" description="Polar residues" evidence="4">
    <location>
        <begin position="432"/>
        <end position="442"/>
    </location>
</feature>
<feature type="compositionally biased region" description="Basic residues" evidence="4">
    <location>
        <begin position="464"/>
        <end position="478"/>
    </location>
</feature>
<feature type="active site" description="Nucleophile" evidence="2">
    <location>
        <position position="97"/>
    </location>
</feature>
<feature type="active site" description="Proton donor" evidence="2">
    <location>
        <position position="176"/>
    </location>
</feature>
<feature type="site" description="Transition state stabilizer" evidence="2">
    <location>
        <position position="91"/>
    </location>
</feature>
<feature type="site" description="Important for enzyme activity" evidence="2">
    <location>
        <position position="191"/>
    </location>
</feature>
<name>CALYP_AEDAE</name>